<comment type="function">
    <text evidence="1">Catalyzes the NADPH-dependent reduction of glyoxylate and hydroxypyruvate into glycolate and glycerate, respectively.</text>
</comment>
<comment type="catalytic activity">
    <reaction evidence="1">
        <text>glycolate + NADP(+) = glyoxylate + NADPH + H(+)</text>
        <dbReference type="Rhea" id="RHEA:10992"/>
        <dbReference type="ChEBI" id="CHEBI:15378"/>
        <dbReference type="ChEBI" id="CHEBI:29805"/>
        <dbReference type="ChEBI" id="CHEBI:36655"/>
        <dbReference type="ChEBI" id="CHEBI:57783"/>
        <dbReference type="ChEBI" id="CHEBI:58349"/>
        <dbReference type="EC" id="1.1.1.79"/>
    </reaction>
</comment>
<comment type="catalytic activity">
    <reaction evidence="1">
        <text>(R)-glycerate + NAD(+) = 3-hydroxypyruvate + NADH + H(+)</text>
        <dbReference type="Rhea" id="RHEA:17905"/>
        <dbReference type="ChEBI" id="CHEBI:15378"/>
        <dbReference type="ChEBI" id="CHEBI:16659"/>
        <dbReference type="ChEBI" id="CHEBI:17180"/>
        <dbReference type="ChEBI" id="CHEBI:57540"/>
        <dbReference type="ChEBI" id="CHEBI:57945"/>
        <dbReference type="EC" id="1.1.1.81"/>
    </reaction>
</comment>
<comment type="catalytic activity">
    <reaction evidence="1">
        <text>(R)-glycerate + NADP(+) = 3-hydroxypyruvate + NADPH + H(+)</text>
        <dbReference type="Rhea" id="RHEA:18657"/>
        <dbReference type="ChEBI" id="CHEBI:15378"/>
        <dbReference type="ChEBI" id="CHEBI:16659"/>
        <dbReference type="ChEBI" id="CHEBI:17180"/>
        <dbReference type="ChEBI" id="CHEBI:57783"/>
        <dbReference type="ChEBI" id="CHEBI:58349"/>
        <dbReference type="EC" id="1.1.1.81"/>
    </reaction>
</comment>
<comment type="subunit">
    <text evidence="1">Homodimer.</text>
</comment>
<comment type="subcellular location">
    <subcellularLocation>
        <location evidence="1">Cytoplasm</location>
    </subcellularLocation>
</comment>
<comment type="similarity">
    <text evidence="1">Belongs to the D-isomer specific 2-hydroxyacid dehydrogenase family. GhrB subfamily.</text>
</comment>
<dbReference type="EC" id="1.1.1.79" evidence="1"/>
<dbReference type="EC" id="1.1.1.81" evidence="1"/>
<dbReference type="EMBL" id="CP000948">
    <property type="protein sequence ID" value="ACB04603.1"/>
    <property type="molecule type" value="Genomic_DNA"/>
</dbReference>
<dbReference type="RefSeq" id="WP_000805038.1">
    <property type="nucleotide sequence ID" value="NC_010473.1"/>
</dbReference>
<dbReference type="SMR" id="B1X8G8"/>
<dbReference type="KEGG" id="ecd:ECDH10B_3732"/>
<dbReference type="HOGENOM" id="CLU_019796_1_2_6"/>
<dbReference type="GO" id="GO:0005829">
    <property type="term" value="C:cytosol"/>
    <property type="evidence" value="ECO:0007669"/>
    <property type="project" value="TreeGrafter"/>
</dbReference>
<dbReference type="GO" id="GO:0005886">
    <property type="term" value="C:plasma membrane"/>
    <property type="evidence" value="ECO:0007669"/>
    <property type="project" value="UniProtKB-UniRule"/>
</dbReference>
<dbReference type="GO" id="GO:0030267">
    <property type="term" value="F:glyoxylate reductase (NADPH) activity"/>
    <property type="evidence" value="ECO:0007669"/>
    <property type="project" value="UniProtKB-UniRule"/>
</dbReference>
<dbReference type="GO" id="GO:0008465">
    <property type="term" value="F:hydroxypyruvate reductase (NADH) activity"/>
    <property type="evidence" value="ECO:0007669"/>
    <property type="project" value="RHEA"/>
</dbReference>
<dbReference type="GO" id="GO:0120509">
    <property type="term" value="F:hydroxypyruvate reductase (NADPH) activity"/>
    <property type="evidence" value="ECO:0007669"/>
    <property type="project" value="RHEA"/>
</dbReference>
<dbReference type="GO" id="GO:0051287">
    <property type="term" value="F:NAD binding"/>
    <property type="evidence" value="ECO:0007669"/>
    <property type="project" value="InterPro"/>
</dbReference>
<dbReference type="CDD" id="cd05301">
    <property type="entry name" value="GDH"/>
    <property type="match status" value="1"/>
</dbReference>
<dbReference type="FunFam" id="3.40.50.720:FF:000026">
    <property type="entry name" value="Glyoxylate/hydroxypyruvate reductase B"/>
    <property type="match status" value="1"/>
</dbReference>
<dbReference type="Gene3D" id="3.40.50.720">
    <property type="entry name" value="NAD(P)-binding Rossmann-like Domain"/>
    <property type="match status" value="2"/>
</dbReference>
<dbReference type="HAMAP" id="MF_01667">
    <property type="entry name" value="2_Hacid_dh_C_GhrB"/>
    <property type="match status" value="1"/>
</dbReference>
<dbReference type="InterPro" id="IPR050223">
    <property type="entry name" value="D-isomer_2-hydroxyacid_DH"/>
</dbReference>
<dbReference type="InterPro" id="IPR006139">
    <property type="entry name" value="D-isomer_2_OHA_DH_cat_dom"/>
</dbReference>
<dbReference type="InterPro" id="IPR029753">
    <property type="entry name" value="D-isomer_DH_CS"/>
</dbReference>
<dbReference type="InterPro" id="IPR006140">
    <property type="entry name" value="D-isomer_DH_NAD-bd"/>
</dbReference>
<dbReference type="InterPro" id="IPR023756">
    <property type="entry name" value="Glyo/OHPyrv_Rdtase_B"/>
</dbReference>
<dbReference type="InterPro" id="IPR036291">
    <property type="entry name" value="NAD(P)-bd_dom_sf"/>
</dbReference>
<dbReference type="NCBIfam" id="NF011938">
    <property type="entry name" value="PRK15409.1"/>
    <property type="match status" value="1"/>
</dbReference>
<dbReference type="PANTHER" id="PTHR10996">
    <property type="entry name" value="2-HYDROXYACID DEHYDROGENASE-RELATED"/>
    <property type="match status" value="1"/>
</dbReference>
<dbReference type="PANTHER" id="PTHR10996:SF283">
    <property type="entry name" value="GLYOXYLATE_HYDROXYPYRUVATE REDUCTASE B"/>
    <property type="match status" value="1"/>
</dbReference>
<dbReference type="Pfam" id="PF00389">
    <property type="entry name" value="2-Hacid_dh"/>
    <property type="match status" value="1"/>
</dbReference>
<dbReference type="Pfam" id="PF02826">
    <property type="entry name" value="2-Hacid_dh_C"/>
    <property type="match status" value="1"/>
</dbReference>
<dbReference type="SUPFAM" id="SSF52283">
    <property type="entry name" value="Formate/glycerate dehydrogenase catalytic domain-like"/>
    <property type="match status" value="1"/>
</dbReference>
<dbReference type="SUPFAM" id="SSF51735">
    <property type="entry name" value="NAD(P)-binding Rossmann-fold domains"/>
    <property type="match status" value="1"/>
</dbReference>
<dbReference type="PROSITE" id="PS00670">
    <property type="entry name" value="D_2_HYDROXYACID_DH_2"/>
    <property type="match status" value="1"/>
</dbReference>
<dbReference type="PROSITE" id="PS00671">
    <property type="entry name" value="D_2_HYDROXYACID_DH_3"/>
    <property type="match status" value="1"/>
</dbReference>
<reference key="1">
    <citation type="journal article" date="2008" name="J. Bacteriol.">
        <title>The complete genome sequence of Escherichia coli DH10B: insights into the biology of a laboratory workhorse.</title>
        <authorList>
            <person name="Durfee T."/>
            <person name="Nelson R."/>
            <person name="Baldwin S."/>
            <person name="Plunkett G. III"/>
            <person name="Burland V."/>
            <person name="Mau B."/>
            <person name="Petrosino J.F."/>
            <person name="Qin X."/>
            <person name="Muzny D.M."/>
            <person name="Ayele M."/>
            <person name="Gibbs R.A."/>
            <person name="Csorgo B."/>
            <person name="Posfai G."/>
            <person name="Weinstock G.M."/>
            <person name="Blattner F.R."/>
        </authorList>
    </citation>
    <scope>NUCLEOTIDE SEQUENCE [LARGE SCALE GENOMIC DNA]</scope>
    <source>
        <strain>K12 / DH10B</strain>
    </source>
</reference>
<keyword id="KW-0963">Cytoplasm</keyword>
<keyword id="KW-0520">NAD</keyword>
<keyword id="KW-0521">NADP</keyword>
<keyword id="KW-0560">Oxidoreductase</keyword>
<protein>
    <recommendedName>
        <fullName evidence="1">Glyoxylate/hydroxypyruvate reductase B</fullName>
        <ecNumber evidence="1">1.1.1.79</ecNumber>
        <ecNumber evidence="1">1.1.1.81</ecNumber>
    </recommendedName>
</protein>
<organism>
    <name type="scientific">Escherichia coli (strain K12 / DH10B)</name>
    <dbReference type="NCBI Taxonomy" id="316385"/>
    <lineage>
        <taxon>Bacteria</taxon>
        <taxon>Pseudomonadati</taxon>
        <taxon>Pseudomonadota</taxon>
        <taxon>Gammaproteobacteria</taxon>
        <taxon>Enterobacterales</taxon>
        <taxon>Enterobacteriaceae</taxon>
        <taxon>Escherichia</taxon>
    </lineage>
</organism>
<proteinExistence type="inferred from homology"/>
<accession>B1X8G8</accession>
<evidence type="ECO:0000255" key="1">
    <source>
        <dbReference type="HAMAP-Rule" id="MF_01667"/>
    </source>
</evidence>
<feature type="chain" id="PRO_0000348384" description="Glyoxylate/hydroxypyruvate reductase B">
    <location>
        <begin position="1"/>
        <end position="324"/>
    </location>
</feature>
<feature type="active site" evidence="1">
    <location>
        <position position="237"/>
    </location>
</feature>
<feature type="active site" evidence="1">
    <location>
        <position position="266"/>
    </location>
</feature>
<feature type="active site" description="Proton donor" evidence="1">
    <location>
        <position position="285"/>
    </location>
</feature>
<sequence>MKPSVILYKALPDDLLQRLQEHFTVHQVANLSPQTVEQNAAIFAEAEGLLGSNENVNAALLEKMPKLRATSTISVGYDNFDVDALTARKILLMHTPTVLTETVADTLMALVLSTARRVVEVAERVKAGEWTASIGPDWYGTDVHHKTLGIVGMGRIGMALAQRAHFGFNMPILYNARRHHKEAEERFNARYCDLDTLLQESDFVCLILPLTDETHHLFGAEQFAKMKSSAIFINAGRGPVVDENALIAALQKGEIHAAGLDVFEQEPLSVDSPLLSMANVVAVPHIGSATHETRYGMAACAVDNLIDALQGKVEKNCVNPHVAD</sequence>
<name>GHRB_ECODH</name>
<gene>
    <name evidence="1" type="primary">ghrB</name>
    <name type="synonym">tiaE</name>
    <name type="ordered locus">ECDH10B_3732</name>
</gene>